<reference key="1">
    <citation type="journal article" date="2001" name="Science">
        <title>Complete genome sequence of a virulent isolate of Streptococcus pneumoniae.</title>
        <authorList>
            <person name="Tettelin H."/>
            <person name="Nelson K.E."/>
            <person name="Paulsen I.T."/>
            <person name="Eisen J.A."/>
            <person name="Read T.D."/>
            <person name="Peterson S.N."/>
            <person name="Heidelberg J.F."/>
            <person name="DeBoy R.T."/>
            <person name="Haft D.H."/>
            <person name="Dodson R.J."/>
            <person name="Durkin A.S."/>
            <person name="Gwinn M.L."/>
            <person name="Kolonay J.F."/>
            <person name="Nelson W.C."/>
            <person name="Peterson J.D."/>
            <person name="Umayam L.A."/>
            <person name="White O."/>
            <person name="Salzberg S.L."/>
            <person name="Lewis M.R."/>
            <person name="Radune D."/>
            <person name="Holtzapple E.K."/>
            <person name="Khouri H.M."/>
            <person name="Wolf A.M."/>
            <person name="Utterback T.R."/>
            <person name="Hansen C.L."/>
            <person name="McDonald L.A."/>
            <person name="Feldblyum T.V."/>
            <person name="Angiuoli S.V."/>
            <person name="Dickinson T."/>
            <person name="Hickey E.K."/>
            <person name="Holt I.E."/>
            <person name="Loftus B.J."/>
            <person name="Yang F."/>
            <person name="Smith H.O."/>
            <person name="Venter J.C."/>
            <person name="Dougherty B.A."/>
            <person name="Morrison D.A."/>
            <person name="Hollingshead S.K."/>
            <person name="Fraser C.M."/>
        </authorList>
    </citation>
    <scope>NUCLEOTIDE SEQUENCE [LARGE SCALE GENOMIC DNA]</scope>
    <source>
        <strain>ATCC BAA-334 / TIGR4</strain>
    </source>
</reference>
<feature type="chain" id="PRO_0000171528" description="Small ribosomal subunit biogenesis GTPase RsgA">
    <location>
        <begin position="1"/>
        <end position="292"/>
    </location>
</feature>
<feature type="domain" description="CP-type G" evidence="2">
    <location>
        <begin position="62"/>
        <end position="213"/>
    </location>
</feature>
<feature type="binding site" evidence="1">
    <location>
        <begin position="111"/>
        <end position="114"/>
    </location>
    <ligand>
        <name>GTP</name>
        <dbReference type="ChEBI" id="CHEBI:37565"/>
    </ligand>
</feature>
<feature type="binding site" evidence="1">
    <location>
        <begin position="156"/>
        <end position="164"/>
    </location>
    <ligand>
        <name>GTP</name>
        <dbReference type="ChEBI" id="CHEBI:37565"/>
    </ligand>
</feature>
<feature type="binding site" evidence="1">
    <location>
        <position position="237"/>
    </location>
    <ligand>
        <name>Zn(2+)</name>
        <dbReference type="ChEBI" id="CHEBI:29105"/>
    </ligand>
</feature>
<feature type="binding site" evidence="1">
    <location>
        <position position="242"/>
    </location>
    <ligand>
        <name>Zn(2+)</name>
        <dbReference type="ChEBI" id="CHEBI:29105"/>
    </ligand>
</feature>
<feature type="binding site" evidence="1">
    <location>
        <position position="244"/>
    </location>
    <ligand>
        <name>Zn(2+)</name>
        <dbReference type="ChEBI" id="CHEBI:29105"/>
    </ligand>
</feature>
<feature type="binding site" evidence="1">
    <location>
        <position position="250"/>
    </location>
    <ligand>
        <name>Zn(2+)</name>
        <dbReference type="ChEBI" id="CHEBI:29105"/>
    </ligand>
</feature>
<comment type="function">
    <text evidence="1">One of several proteins that assist in the late maturation steps of the functional core of the 30S ribosomal subunit. Helps release RbfA from mature subunits. May play a role in the assembly of ribosomal proteins into the subunit. Circularly permuted GTPase that catalyzes slow GTP hydrolysis, GTPase activity is stimulated by the 30S ribosomal subunit.</text>
</comment>
<comment type="cofactor">
    <cofactor evidence="1">
        <name>Zn(2+)</name>
        <dbReference type="ChEBI" id="CHEBI:29105"/>
    </cofactor>
    <text evidence="1">Binds 1 zinc ion per subunit.</text>
</comment>
<comment type="subunit">
    <text evidence="1">Monomer. Associates with 30S ribosomal subunit, binds 16S rRNA.</text>
</comment>
<comment type="subcellular location">
    <subcellularLocation>
        <location evidence="1">Cytoplasm</location>
    </subcellularLocation>
</comment>
<comment type="similarity">
    <text evidence="1">Belongs to the TRAFAC class YlqF/YawG GTPase family. RsgA subfamily.</text>
</comment>
<gene>
    <name evidence="1" type="primary">rsgA</name>
    <name type="ordered locus">SP_1984</name>
</gene>
<sequence>MQGQIIKALAGFYYVESDGQVYQTRARGNFRKKGHTPYVGDWVDFSAEENSEGYILKIHERKNSLVRPPIVNIDQAVVIMSVKEPDFNSNLLDRFLVLLEHKGIHPIVYISKMDLLEDRGELDFYQQTYGDIGYDFVTSKEELLSLLTGKVTVFMGQTGVGKSTLLNKIAPDLNLETGEISDSLGRGRHTTRAVSFYNLNGGKIADTPGFSSLDYEVSRAEDLNQAFPEIATVSRDCKFRTCTHTHEPSCAVKPAVEEGVIATFRFDNYLQFLSEIENRRETYKKVSKKIPK</sequence>
<accession>P67684</accession>
<accession>Q8DND4</accession>
<accession>Q97NN6</accession>
<evidence type="ECO:0000255" key="1">
    <source>
        <dbReference type="HAMAP-Rule" id="MF_01820"/>
    </source>
</evidence>
<evidence type="ECO:0000255" key="2">
    <source>
        <dbReference type="PROSITE-ProRule" id="PRU01058"/>
    </source>
</evidence>
<protein>
    <recommendedName>
        <fullName evidence="1">Small ribosomal subunit biogenesis GTPase RsgA</fullName>
        <ecNumber evidence="1">3.6.1.-</ecNumber>
    </recommendedName>
</protein>
<keyword id="KW-0963">Cytoplasm</keyword>
<keyword id="KW-0342">GTP-binding</keyword>
<keyword id="KW-0378">Hydrolase</keyword>
<keyword id="KW-0479">Metal-binding</keyword>
<keyword id="KW-0547">Nucleotide-binding</keyword>
<keyword id="KW-1185">Reference proteome</keyword>
<keyword id="KW-0690">Ribosome biogenesis</keyword>
<keyword id="KW-0694">RNA-binding</keyword>
<keyword id="KW-0699">rRNA-binding</keyword>
<keyword id="KW-0862">Zinc</keyword>
<name>RSGA_STRPN</name>
<organism>
    <name type="scientific">Streptococcus pneumoniae serotype 4 (strain ATCC BAA-334 / TIGR4)</name>
    <dbReference type="NCBI Taxonomy" id="170187"/>
    <lineage>
        <taxon>Bacteria</taxon>
        <taxon>Bacillati</taxon>
        <taxon>Bacillota</taxon>
        <taxon>Bacilli</taxon>
        <taxon>Lactobacillales</taxon>
        <taxon>Streptococcaceae</taxon>
        <taxon>Streptococcus</taxon>
    </lineage>
</organism>
<proteinExistence type="inferred from homology"/>
<dbReference type="EC" id="3.6.1.-" evidence="1"/>
<dbReference type="EMBL" id="AE005672">
    <property type="protein sequence ID" value="AAK76051.1"/>
    <property type="molecule type" value="Genomic_DNA"/>
</dbReference>
<dbReference type="PIR" id="B95232">
    <property type="entry name" value="B95232"/>
</dbReference>
<dbReference type="RefSeq" id="WP_001161981.1">
    <property type="nucleotide sequence ID" value="NZ_CP155539.1"/>
</dbReference>
<dbReference type="SMR" id="P67684"/>
<dbReference type="PaxDb" id="170187-SP_1984"/>
<dbReference type="EnsemblBacteria" id="AAK76051">
    <property type="protein sequence ID" value="AAK76051"/>
    <property type="gene ID" value="SP_1984"/>
</dbReference>
<dbReference type="KEGG" id="spn:SP_1984"/>
<dbReference type="eggNOG" id="COG1162">
    <property type="taxonomic scope" value="Bacteria"/>
</dbReference>
<dbReference type="PhylomeDB" id="P67684"/>
<dbReference type="BioCyc" id="SPNE170187:G1FZB-2039-MONOMER"/>
<dbReference type="Proteomes" id="UP000000585">
    <property type="component" value="Chromosome"/>
</dbReference>
<dbReference type="GO" id="GO:0005737">
    <property type="term" value="C:cytoplasm"/>
    <property type="evidence" value="ECO:0007669"/>
    <property type="project" value="UniProtKB-SubCell"/>
</dbReference>
<dbReference type="GO" id="GO:0005525">
    <property type="term" value="F:GTP binding"/>
    <property type="evidence" value="ECO:0007669"/>
    <property type="project" value="UniProtKB-UniRule"/>
</dbReference>
<dbReference type="GO" id="GO:0003924">
    <property type="term" value="F:GTPase activity"/>
    <property type="evidence" value="ECO:0007669"/>
    <property type="project" value="UniProtKB-UniRule"/>
</dbReference>
<dbReference type="GO" id="GO:0046872">
    <property type="term" value="F:metal ion binding"/>
    <property type="evidence" value="ECO:0007669"/>
    <property type="project" value="UniProtKB-KW"/>
</dbReference>
<dbReference type="GO" id="GO:0019843">
    <property type="term" value="F:rRNA binding"/>
    <property type="evidence" value="ECO:0007669"/>
    <property type="project" value="UniProtKB-KW"/>
</dbReference>
<dbReference type="GO" id="GO:0042274">
    <property type="term" value="P:ribosomal small subunit biogenesis"/>
    <property type="evidence" value="ECO:0007669"/>
    <property type="project" value="UniProtKB-UniRule"/>
</dbReference>
<dbReference type="CDD" id="cd04466">
    <property type="entry name" value="S1_YloQ_GTPase"/>
    <property type="match status" value="1"/>
</dbReference>
<dbReference type="CDD" id="cd01854">
    <property type="entry name" value="YjeQ_EngC"/>
    <property type="match status" value="1"/>
</dbReference>
<dbReference type="Gene3D" id="2.40.50.140">
    <property type="entry name" value="Nucleic acid-binding proteins"/>
    <property type="match status" value="1"/>
</dbReference>
<dbReference type="Gene3D" id="3.40.50.300">
    <property type="entry name" value="P-loop containing nucleotide triphosphate hydrolases"/>
    <property type="match status" value="1"/>
</dbReference>
<dbReference type="Gene3D" id="1.10.40.50">
    <property type="entry name" value="Probable gtpase engc, domain 3"/>
    <property type="match status" value="1"/>
</dbReference>
<dbReference type="HAMAP" id="MF_01820">
    <property type="entry name" value="GTPase_RsgA"/>
    <property type="match status" value="1"/>
</dbReference>
<dbReference type="InterPro" id="IPR030378">
    <property type="entry name" value="G_CP_dom"/>
</dbReference>
<dbReference type="InterPro" id="IPR012340">
    <property type="entry name" value="NA-bd_OB-fold"/>
</dbReference>
<dbReference type="InterPro" id="IPR027417">
    <property type="entry name" value="P-loop_NTPase"/>
</dbReference>
<dbReference type="InterPro" id="IPR004881">
    <property type="entry name" value="Ribosome_biogen_GTPase_RsgA"/>
</dbReference>
<dbReference type="InterPro" id="IPR010914">
    <property type="entry name" value="RsgA_GTPase_dom"/>
</dbReference>
<dbReference type="InterPro" id="IPR031944">
    <property type="entry name" value="RsgA_N"/>
</dbReference>
<dbReference type="NCBIfam" id="TIGR00157">
    <property type="entry name" value="ribosome small subunit-dependent GTPase A"/>
    <property type="match status" value="1"/>
</dbReference>
<dbReference type="PANTHER" id="PTHR32120">
    <property type="entry name" value="SMALL RIBOSOMAL SUBUNIT BIOGENESIS GTPASE RSGA"/>
    <property type="match status" value="1"/>
</dbReference>
<dbReference type="PANTHER" id="PTHR32120:SF11">
    <property type="entry name" value="SMALL RIBOSOMAL SUBUNIT BIOGENESIS GTPASE RSGA 1, MITOCHONDRIAL-RELATED"/>
    <property type="match status" value="1"/>
</dbReference>
<dbReference type="Pfam" id="PF03193">
    <property type="entry name" value="RsgA_GTPase"/>
    <property type="match status" value="1"/>
</dbReference>
<dbReference type="Pfam" id="PF16745">
    <property type="entry name" value="RsgA_N"/>
    <property type="match status" value="1"/>
</dbReference>
<dbReference type="SUPFAM" id="SSF50249">
    <property type="entry name" value="Nucleic acid-binding proteins"/>
    <property type="match status" value="1"/>
</dbReference>
<dbReference type="SUPFAM" id="SSF52540">
    <property type="entry name" value="P-loop containing nucleoside triphosphate hydrolases"/>
    <property type="match status" value="1"/>
</dbReference>
<dbReference type="PROSITE" id="PS50936">
    <property type="entry name" value="ENGC_GTPASE"/>
    <property type="match status" value="1"/>
</dbReference>
<dbReference type="PROSITE" id="PS51721">
    <property type="entry name" value="G_CP"/>
    <property type="match status" value="1"/>
</dbReference>